<evidence type="ECO:0000255" key="1">
    <source>
        <dbReference type="HAMAP-Rule" id="MF_00777"/>
    </source>
</evidence>
<evidence type="ECO:0000305" key="2"/>
<name>RS27A_METKA</name>
<feature type="chain" id="PRO_0000137695" description="Small ribosomal subunit protein eS31">
    <location>
        <begin position="1"/>
        <end position="60"/>
    </location>
</feature>
<feature type="zinc finger region" description="C4-type" evidence="1">
    <location>
        <begin position="24"/>
        <end position="45"/>
    </location>
</feature>
<feature type="binding site" evidence="1">
    <location>
        <position position="24"/>
    </location>
    <ligand>
        <name>Zn(2+)</name>
        <dbReference type="ChEBI" id="CHEBI:29105"/>
    </ligand>
</feature>
<feature type="binding site" evidence="1">
    <location>
        <position position="27"/>
    </location>
    <ligand>
        <name>Zn(2+)</name>
        <dbReference type="ChEBI" id="CHEBI:29105"/>
    </ligand>
</feature>
<feature type="binding site" evidence="1">
    <location>
        <position position="42"/>
    </location>
    <ligand>
        <name>Zn(2+)</name>
        <dbReference type="ChEBI" id="CHEBI:29105"/>
    </ligand>
</feature>
<feature type="binding site" evidence="1">
    <location>
        <position position="45"/>
    </location>
    <ligand>
        <name>Zn(2+)</name>
        <dbReference type="ChEBI" id="CHEBI:29105"/>
    </ligand>
</feature>
<dbReference type="EMBL" id="AE009439">
    <property type="protein sequence ID" value="AAM02668.1"/>
    <property type="molecule type" value="Genomic_DNA"/>
</dbReference>
<dbReference type="SMR" id="Q8TVD7"/>
<dbReference type="FunCoup" id="Q8TVD7">
    <property type="interactions" value="60"/>
</dbReference>
<dbReference type="STRING" id="190192.MK1455"/>
<dbReference type="PaxDb" id="190192-MK1455"/>
<dbReference type="EnsemblBacteria" id="AAM02668">
    <property type="protein sequence ID" value="AAM02668"/>
    <property type="gene ID" value="MK1455"/>
</dbReference>
<dbReference type="KEGG" id="mka:MK1455"/>
<dbReference type="PATRIC" id="fig|190192.8.peg.1611"/>
<dbReference type="HOGENOM" id="CLU_179743_2_0_2"/>
<dbReference type="InParanoid" id="Q8TVD7"/>
<dbReference type="OrthoDB" id="25142at2157"/>
<dbReference type="Proteomes" id="UP000001826">
    <property type="component" value="Chromosome"/>
</dbReference>
<dbReference type="GO" id="GO:1990904">
    <property type="term" value="C:ribonucleoprotein complex"/>
    <property type="evidence" value="ECO:0007669"/>
    <property type="project" value="UniProtKB-KW"/>
</dbReference>
<dbReference type="GO" id="GO:0005840">
    <property type="term" value="C:ribosome"/>
    <property type="evidence" value="ECO:0007669"/>
    <property type="project" value="UniProtKB-KW"/>
</dbReference>
<dbReference type="GO" id="GO:0003735">
    <property type="term" value="F:structural constituent of ribosome"/>
    <property type="evidence" value="ECO:0007669"/>
    <property type="project" value="InterPro"/>
</dbReference>
<dbReference type="GO" id="GO:0008270">
    <property type="term" value="F:zinc ion binding"/>
    <property type="evidence" value="ECO:0007669"/>
    <property type="project" value="UniProtKB-UniRule"/>
</dbReference>
<dbReference type="GO" id="GO:0006412">
    <property type="term" value="P:translation"/>
    <property type="evidence" value="ECO:0007669"/>
    <property type="project" value="UniProtKB-UniRule"/>
</dbReference>
<dbReference type="Gene3D" id="6.20.50.180">
    <property type="match status" value="1"/>
</dbReference>
<dbReference type="HAMAP" id="MF_00777">
    <property type="entry name" value="Ribosomal_eS31"/>
    <property type="match status" value="1"/>
</dbReference>
<dbReference type="InterPro" id="IPR002906">
    <property type="entry name" value="Ribosomal_eS31"/>
</dbReference>
<dbReference type="InterPro" id="IPR022845">
    <property type="entry name" value="Ribosomal_eS31_arc"/>
</dbReference>
<dbReference type="InterPro" id="IPR011332">
    <property type="entry name" value="Ribosomal_zn-bd"/>
</dbReference>
<dbReference type="NCBIfam" id="NF001669">
    <property type="entry name" value="PRK00432.1"/>
    <property type="match status" value="1"/>
</dbReference>
<dbReference type="Pfam" id="PF01599">
    <property type="entry name" value="Ribosomal_S27"/>
    <property type="match status" value="1"/>
</dbReference>
<dbReference type="SMART" id="SM01402">
    <property type="entry name" value="Ribosomal_S27"/>
    <property type="match status" value="1"/>
</dbReference>
<dbReference type="SUPFAM" id="SSF57829">
    <property type="entry name" value="Zn-binding ribosomal proteins"/>
    <property type="match status" value="1"/>
</dbReference>
<proteinExistence type="inferred from homology"/>
<protein>
    <recommendedName>
        <fullName evidence="1">Small ribosomal subunit protein eS31</fullName>
    </recommendedName>
    <alternativeName>
        <fullName evidence="2">30S ribosomal protein S27ae</fullName>
    </alternativeName>
</protein>
<comment type="cofactor">
    <cofactor evidence="1">
        <name>Zn(2+)</name>
        <dbReference type="ChEBI" id="CHEBI:29105"/>
    </cofactor>
    <text evidence="1">Binds 1 zinc ion per subunit.</text>
</comment>
<comment type="subunit">
    <text evidence="1">Part of the 30S ribosomal subunit.</text>
</comment>
<comment type="similarity">
    <text evidence="1">Belongs to the eukaryotic ribosomal protein eS31 family.</text>
</comment>
<accession>Q8TVD7</accession>
<gene>
    <name evidence="1" type="primary">rps27ae</name>
    <name type="ordered locus">MK1455</name>
</gene>
<reference key="1">
    <citation type="journal article" date="2002" name="Proc. Natl. Acad. Sci. U.S.A.">
        <title>The complete genome of hyperthermophile Methanopyrus kandleri AV19 and monophyly of archaeal methanogens.</title>
        <authorList>
            <person name="Slesarev A.I."/>
            <person name="Mezhevaya K.V."/>
            <person name="Makarova K.S."/>
            <person name="Polushin N.N."/>
            <person name="Shcherbinina O.V."/>
            <person name="Shakhova V.V."/>
            <person name="Belova G.I."/>
            <person name="Aravind L."/>
            <person name="Natale D.A."/>
            <person name="Rogozin I.B."/>
            <person name="Tatusov R.L."/>
            <person name="Wolf Y.I."/>
            <person name="Stetter K.O."/>
            <person name="Malykh A.G."/>
            <person name="Koonin E.V."/>
            <person name="Kozyavkin S.A."/>
        </authorList>
    </citation>
    <scope>NUCLEOTIDE SEQUENCE [LARGE SCALE GENOMIC DNA]</scope>
    <source>
        <strain>AV19 / DSM 6324 / JCM 9639 / NBRC 100938</strain>
    </source>
</reference>
<sequence length="60" mass="6876">MGVPRRAKLYEVKDGKVERKNPFCPRCGPGVFMADHGNRYACGRCGYTEFKDQPEPKKKK</sequence>
<keyword id="KW-0479">Metal-binding</keyword>
<keyword id="KW-1185">Reference proteome</keyword>
<keyword id="KW-0687">Ribonucleoprotein</keyword>
<keyword id="KW-0689">Ribosomal protein</keyword>
<keyword id="KW-0862">Zinc</keyword>
<keyword id="KW-0863">Zinc-finger</keyword>
<organism>
    <name type="scientific">Methanopyrus kandleri (strain AV19 / DSM 6324 / JCM 9639 / NBRC 100938)</name>
    <dbReference type="NCBI Taxonomy" id="190192"/>
    <lineage>
        <taxon>Archaea</taxon>
        <taxon>Methanobacteriati</taxon>
        <taxon>Methanobacteriota</taxon>
        <taxon>Methanomada group</taxon>
        <taxon>Methanopyri</taxon>
        <taxon>Methanopyrales</taxon>
        <taxon>Methanopyraceae</taxon>
        <taxon>Methanopyrus</taxon>
    </lineage>
</organism>